<dbReference type="EC" id="2.4.1.325" evidence="1"/>
<dbReference type="EMBL" id="CU928162">
    <property type="protein sequence ID" value="CAR10597.2"/>
    <property type="molecule type" value="Genomic_DNA"/>
</dbReference>
<dbReference type="RefSeq" id="WP_000217277.1">
    <property type="nucleotide sequence ID" value="NC_011745.1"/>
</dbReference>
<dbReference type="SMR" id="B7MR14"/>
<dbReference type="CAZy" id="GT56">
    <property type="family name" value="Glycosyltransferase Family 56"/>
</dbReference>
<dbReference type="KEGG" id="ecq:ECED1_4478"/>
<dbReference type="HOGENOM" id="CLU_066584_0_0_6"/>
<dbReference type="UniPathway" id="UPA00566"/>
<dbReference type="Proteomes" id="UP000000748">
    <property type="component" value="Chromosome"/>
</dbReference>
<dbReference type="GO" id="GO:0005886">
    <property type="term" value="C:plasma membrane"/>
    <property type="evidence" value="ECO:0007669"/>
    <property type="project" value="UniProtKB-SubCell"/>
</dbReference>
<dbReference type="GO" id="GO:0102031">
    <property type="term" value="F:4-acetamido-4,6-dideoxy-D-galactose transferase activity"/>
    <property type="evidence" value="ECO:0007669"/>
    <property type="project" value="UniProtKB-EC"/>
</dbReference>
<dbReference type="GO" id="GO:0008417">
    <property type="term" value="F:fucosyltransferase activity"/>
    <property type="evidence" value="ECO:0007669"/>
    <property type="project" value="InterPro"/>
</dbReference>
<dbReference type="GO" id="GO:0009246">
    <property type="term" value="P:enterobacterial common antigen biosynthetic process"/>
    <property type="evidence" value="ECO:0007669"/>
    <property type="project" value="UniProtKB-UniRule"/>
</dbReference>
<dbReference type="GO" id="GO:0036065">
    <property type="term" value="P:fucosylation"/>
    <property type="evidence" value="ECO:0007669"/>
    <property type="project" value="InterPro"/>
</dbReference>
<dbReference type="HAMAP" id="MF_01002">
    <property type="entry name" value="WecF_RffT"/>
    <property type="match status" value="1"/>
</dbReference>
<dbReference type="InterPro" id="IPR009993">
    <property type="entry name" value="WecF"/>
</dbReference>
<dbReference type="NCBIfam" id="NF002752">
    <property type="entry name" value="PRK02797.1-1"/>
    <property type="match status" value="1"/>
</dbReference>
<dbReference type="NCBIfam" id="NF002753">
    <property type="entry name" value="PRK02797.1-2"/>
    <property type="match status" value="1"/>
</dbReference>
<dbReference type="NCBIfam" id="NF002754">
    <property type="entry name" value="PRK02797.1-3"/>
    <property type="match status" value="1"/>
</dbReference>
<dbReference type="Pfam" id="PF07429">
    <property type="entry name" value="Glyco_transf_56"/>
    <property type="match status" value="1"/>
</dbReference>
<gene>
    <name evidence="1" type="primary">wecF</name>
    <name evidence="1" type="synonym">rffT</name>
    <name type="ordered locus">ECED1_4478</name>
</gene>
<evidence type="ECO:0000255" key="1">
    <source>
        <dbReference type="HAMAP-Rule" id="MF_01002"/>
    </source>
</evidence>
<sequence>MTVLIHVLGSDIPHHNRTVLRFFNDALAATSGHAREFMVAGKDDGLSDSCPALSVQFFPGKKSLAEAVIAKAKANRQQRFFFHGQFNPKLWLALLSGGIKPSQFFWHIWGADLYELSSGLRYKLFYPLRRLAQKRVGCVFATRGDLSFFAKTHPKVRGELLYFPTRMDPSLNTMANDRQREGKMTILVGNSGDRSNEHIAALRAVHQQFGDTVKVVVPMGYPPNNEAYIEEVRQAGLELFSEENLQVLSEKLEFDAYLTLLRQCDLGYFIFARQQGIGTLCLLIQAGIPCVLNRENPFWQDMTEQHLPVLFTTDDLNEDIVREAQRQLASVDKNTIAFFSPNYLQGWQRALAIATGEVA</sequence>
<proteinExistence type="inferred from homology"/>
<accession>B7MR14</accession>
<feature type="chain" id="PRO_1000148785" description="TDP-N-acetylfucosamine:lipid II N-acetylfucosaminyltransferase">
    <location>
        <begin position="1"/>
        <end position="359"/>
    </location>
</feature>
<keyword id="KW-0997">Cell inner membrane</keyword>
<keyword id="KW-1003">Cell membrane</keyword>
<keyword id="KW-0328">Glycosyltransferase</keyword>
<keyword id="KW-0472">Membrane</keyword>
<keyword id="KW-0808">Transferase</keyword>
<name>WECF_ECO81</name>
<organism>
    <name type="scientific">Escherichia coli O81 (strain ED1a)</name>
    <dbReference type="NCBI Taxonomy" id="585397"/>
    <lineage>
        <taxon>Bacteria</taxon>
        <taxon>Pseudomonadati</taxon>
        <taxon>Pseudomonadota</taxon>
        <taxon>Gammaproteobacteria</taxon>
        <taxon>Enterobacterales</taxon>
        <taxon>Enterobacteriaceae</taxon>
        <taxon>Escherichia</taxon>
    </lineage>
</organism>
<reference key="1">
    <citation type="journal article" date="2009" name="PLoS Genet.">
        <title>Organised genome dynamics in the Escherichia coli species results in highly diverse adaptive paths.</title>
        <authorList>
            <person name="Touchon M."/>
            <person name="Hoede C."/>
            <person name="Tenaillon O."/>
            <person name="Barbe V."/>
            <person name="Baeriswyl S."/>
            <person name="Bidet P."/>
            <person name="Bingen E."/>
            <person name="Bonacorsi S."/>
            <person name="Bouchier C."/>
            <person name="Bouvet O."/>
            <person name="Calteau A."/>
            <person name="Chiapello H."/>
            <person name="Clermont O."/>
            <person name="Cruveiller S."/>
            <person name="Danchin A."/>
            <person name="Diard M."/>
            <person name="Dossat C."/>
            <person name="Karoui M.E."/>
            <person name="Frapy E."/>
            <person name="Garry L."/>
            <person name="Ghigo J.M."/>
            <person name="Gilles A.M."/>
            <person name="Johnson J."/>
            <person name="Le Bouguenec C."/>
            <person name="Lescat M."/>
            <person name="Mangenot S."/>
            <person name="Martinez-Jehanne V."/>
            <person name="Matic I."/>
            <person name="Nassif X."/>
            <person name="Oztas S."/>
            <person name="Petit M.A."/>
            <person name="Pichon C."/>
            <person name="Rouy Z."/>
            <person name="Ruf C.S."/>
            <person name="Schneider D."/>
            <person name="Tourret J."/>
            <person name="Vacherie B."/>
            <person name="Vallenet D."/>
            <person name="Medigue C."/>
            <person name="Rocha E.P.C."/>
            <person name="Denamur E."/>
        </authorList>
    </citation>
    <scope>NUCLEOTIDE SEQUENCE [LARGE SCALE GENOMIC DNA]</scope>
    <source>
        <strain>ED1a</strain>
    </source>
</reference>
<protein>
    <recommendedName>
        <fullName evidence="1">TDP-N-acetylfucosamine:lipid II N-acetylfucosaminyltransferase</fullName>
        <ecNumber evidence="1">2.4.1.325</ecNumber>
    </recommendedName>
    <alternativeName>
        <fullName evidence="1">4-alpha-L-fucosyltransferase</fullName>
    </alternativeName>
    <alternativeName>
        <fullName evidence="1">TDP-Fuc4NAc:lipid II Fuc4NAc transferase</fullName>
        <shortName evidence="1">Fuc4NAc transferase</shortName>
    </alternativeName>
</protein>
<comment type="function">
    <text evidence="1">Catalyzes the synthesis of Und-PP-GlcNAc-ManNAcA-Fuc4NAc (Lipid III), the third lipid-linked intermediate involved in ECA synthesis.</text>
</comment>
<comment type="catalytic activity">
    <reaction evidence="1">
        <text>beta-D-ManNAcA-(1-&gt;4)-alpha-D-GlcNAc-di-trans,octa-cis-undecaprenyl diphosphate + dTDP-4-acetamido-4,6-dideoxy-alpha-D-galactose = alpha-D-FucNAc4-(1-&gt;4)-beta-D-ManNAcA-(1-&gt;4)-D-GlcNAc-undecaprenyl diphosphate + dTDP + H(+)</text>
        <dbReference type="Rhea" id="RHEA:28759"/>
        <dbReference type="ChEBI" id="CHEBI:15378"/>
        <dbReference type="ChEBI" id="CHEBI:58369"/>
        <dbReference type="ChEBI" id="CHEBI:61495"/>
        <dbReference type="ChEBI" id="CHEBI:61496"/>
        <dbReference type="ChEBI" id="CHEBI:68493"/>
        <dbReference type="EC" id="2.4.1.325"/>
    </reaction>
</comment>
<comment type="pathway">
    <text evidence="1">Bacterial outer membrane biogenesis; enterobacterial common antigen biosynthesis.</text>
</comment>
<comment type="subcellular location">
    <subcellularLocation>
        <location evidence="1">Cell inner membrane</location>
        <topology evidence="1">Peripheral membrane protein</topology>
    </subcellularLocation>
</comment>
<comment type="similarity">
    <text evidence="1">Belongs to the glycosyltransferase 56 family.</text>
</comment>